<sequence length="780" mass="88139">MLPNNQWQIPINNGLTHQENMAAHAAVMKLRVHDLQSIISQLSLRKPRPQKSEHQKVVVESLRDPHHARQIYQMASNFPNGNYEMQKRPATTSQVRSHPYVLPSRSGASNHLVNHHYQQQQQQQPQPHNLLHQQMMASHHSHLQQQHHPSTVRWLTPELLEEQLRGSMRYGAPAAAAATNAPLHSSFPNHGRSSQQSLQKSEKSNRPKKMYADNFEPLPLPFYDVISVLLKPVELHSSDSPTLKQTKQLQFPFLLTAEHISKISYRADVTPLPRYELQLRFFNLTEPVQGPQKDDFPLNCYARVDDSVVQLPNVIPTNKTNAEPKRPSRPVNITSNMNRYKKEHTVAVEWLADKRVWAAGVYFVHRVNSDILFKRLNQNVSRHRSLEVTKQEVIKKLSGGEDDIAMDRLNISLLDPLCKTRMTTPSRCQDCTHLQCFDLLSYLMMNEKKPTWQCPVCSSNCPYDRLIVDDYFLDMLAKVDKNTTEVELKEDGSYDVIKEEAFCISDDDDDDVVPATVNGTASCSSTNGNGLANEAAKKKPADDDIITLSDDDDEELNRGIMNSLNDSFSPGRHTASAELAAQKTPPQQKKKTKDDDIEIITLDDTPPRPVAASANLPMRQMSQQNQMPVGSSPSGMASTQMGMNEGASKTIRDALNKIGEQSANSSTQSSPLVQLHHTTHPLNFAQSSYMNPSSGSQTPTSQYGYSPMINQAPHFQMQNGLIGRNNQMVHMQQHHLQQQQQQQQSPQIMSPSFYAQQQMSNGGAFAYYPPQYPQQQYRQN</sequence>
<evidence type="ECO:0000255" key="1">
    <source>
        <dbReference type="PROSITE-ProRule" id="PRU00452"/>
    </source>
</evidence>
<evidence type="ECO:0000255" key="2">
    <source>
        <dbReference type="PROSITE-ProRule" id="PRU00799"/>
    </source>
</evidence>
<evidence type="ECO:0000256" key="3">
    <source>
        <dbReference type="SAM" id="MobiDB-lite"/>
    </source>
</evidence>
<evidence type="ECO:0000269" key="4">
    <source>
    </source>
</evidence>
<evidence type="ECO:0000269" key="5">
    <source>
    </source>
</evidence>
<evidence type="ECO:0000269" key="6">
    <source>
    </source>
</evidence>
<evidence type="ECO:0000269" key="7">
    <source>
    </source>
</evidence>
<evidence type="ECO:0000269" key="8">
    <source>
    </source>
</evidence>
<evidence type="ECO:0000269" key="9">
    <source>
    </source>
</evidence>
<evidence type="ECO:0000269" key="10">
    <source>
    </source>
</evidence>
<evidence type="ECO:0000269" key="11">
    <source>
    </source>
</evidence>
<evidence type="ECO:0000305" key="12"/>
<evidence type="ECO:0000312" key="13">
    <source>
        <dbReference type="WormBase" id="W10D5.3c"/>
    </source>
</evidence>
<dbReference type="EC" id="2.3.2.-"/>
<dbReference type="EMBL" id="BX284601">
    <property type="protein sequence ID" value="CAB02133.4"/>
    <property type="molecule type" value="Genomic_DNA"/>
</dbReference>
<dbReference type="EMBL" id="BX284601">
    <property type="protein sequence ID" value="CAB02134.3"/>
    <property type="molecule type" value="Genomic_DNA"/>
</dbReference>
<dbReference type="EMBL" id="BX284601">
    <property type="protein sequence ID" value="CAB54321.3"/>
    <property type="molecule type" value="Genomic_DNA"/>
</dbReference>
<dbReference type="EMBL" id="BX284601">
    <property type="protein sequence ID" value="CAD98729.3"/>
    <property type="molecule type" value="Genomic_DNA"/>
</dbReference>
<dbReference type="EMBL" id="BX284601">
    <property type="protein sequence ID" value="CAD98730.3"/>
    <property type="molecule type" value="Genomic_DNA"/>
</dbReference>
<dbReference type="EMBL" id="BX284601">
    <property type="protein sequence ID" value="CAI79179.3"/>
    <property type="molecule type" value="Genomic_DNA"/>
</dbReference>
<dbReference type="PIR" id="T26330">
    <property type="entry name" value="T26330"/>
</dbReference>
<dbReference type="PIR" id="T26331">
    <property type="entry name" value="T26331"/>
</dbReference>
<dbReference type="PIR" id="T26332">
    <property type="entry name" value="T26332"/>
</dbReference>
<dbReference type="RefSeq" id="NP_001021677.3">
    <molecule id="Q94361-4"/>
    <property type="nucleotide sequence ID" value="NM_001026506.5"/>
</dbReference>
<dbReference type="RefSeq" id="NP_001021678.3">
    <molecule id="Q94361-2"/>
    <property type="nucleotide sequence ID" value="NM_001026507.5"/>
</dbReference>
<dbReference type="RefSeq" id="NP_001021679.3">
    <molecule id="Q94361-3"/>
    <property type="nucleotide sequence ID" value="NM_001026508.7"/>
</dbReference>
<dbReference type="RefSeq" id="NP_492442.3">
    <molecule id="Q94361-5"/>
    <property type="nucleotide sequence ID" value="NM_060041.7"/>
</dbReference>
<dbReference type="RefSeq" id="NP_492443.3">
    <molecule id="Q94361-6"/>
    <property type="nucleotide sequence ID" value="NM_060042.5"/>
</dbReference>
<dbReference type="RefSeq" id="NP_492444.4">
    <molecule id="Q94361-1"/>
    <property type="nucleotide sequence ID" value="NM_060043.5"/>
</dbReference>
<dbReference type="SMR" id="Q94361"/>
<dbReference type="BioGRID" id="38164">
    <property type="interactions" value="21"/>
</dbReference>
<dbReference type="DIP" id="DIP-24916N"/>
<dbReference type="FunCoup" id="Q94361">
    <property type="interactions" value="1442"/>
</dbReference>
<dbReference type="IntAct" id="Q94361">
    <property type="interactions" value="9"/>
</dbReference>
<dbReference type="STRING" id="6239.W10D5.3c.3"/>
<dbReference type="PaxDb" id="6239-W10D5.3c.1"/>
<dbReference type="PeptideAtlas" id="Q94361"/>
<dbReference type="EnsemblMetazoa" id="W10D5.3a.1">
    <molecule id="Q94361-5"/>
    <property type="protein sequence ID" value="W10D5.3a.1"/>
    <property type="gene ID" value="WBGene00001574"/>
</dbReference>
<dbReference type="EnsemblMetazoa" id="W10D5.3a.2">
    <molecule id="Q94361-5"/>
    <property type="protein sequence ID" value="W10D5.3a.2"/>
    <property type="gene ID" value="WBGene00001574"/>
</dbReference>
<dbReference type="EnsemblMetazoa" id="W10D5.3c.1">
    <molecule id="Q94361-1"/>
    <property type="protein sequence ID" value="W10D5.3c.1"/>
    <property type="gene ID" value="WBGene00001574"/>
</dbReference>
<dbReference type="EnsemblMetazoa" id="W10D5.3c.2">
    <molecule id="Q94361-1"/>
    <property type="protein sequence ID" value="W10D5.3c.2"/>
    <property type="gene ID" value="WBGene00001574"/>
</dbReference>
<dbReference type="EnsemblMetazoa" id="W10D5.3c.3">
    <molecule id="Q94361-1"/>
    <property type="protein sequence ID" value="W10D5.3c.3"/>
    <property type="gene ID" value="WBGene00001574"/>
</dbReference>
<dbReference type="EnsemblMetazoa" id="W10D5.3d.1">
    <molecule id="Q94361-6"/>
    <property type="protein sequence ID" value="W10D5.3d.1"/>
    <property type="gene ID" value="WBGene00001574"/>
</dbReference>
<dbReference type="EnsemblMetazoa" id="W10D5.3e.1">
    <molecule id="Q94361-4"/>
    <property type="protein sequence ID" value="W10D5.3e.1"/>
    <property type="gene ID" value="WBGene00001574"/>
</dbReference>
<dbReference type="EnsemblMetazoa" id="W10D5.3f.1">
    <molecule id="Q94361-2"/>
    <property type="protein sequence ID" value="W10D5.3f.1"/>
    <property type="gene ID" value="WBGene00001574"/>
</dbReference>
<dbReference type="EnsemblMetazoa" id="W10D5.3g.1">
    <molecule id="Q94361-3"/>
    <property type="protein sequence ID" value="W10D5.3g.1"/>
    <property type="gene ID" value="WBGene00001574"/>
</dbReference>
<dbReference type="GeneID" id="172733"/>
<dbReference type="KEGG" id="cel:CELE_W10D5.3"/>
<dbReference type="UCSC" id="W10D5.3f">
    <molecule id="Q94361-1"/>
    <property type="organism name" value="c. elegans"/>
</dbReference>
<dbReference type="AGR" id="WB:WBGene00001574"/>
<dbReference type="CTD" id="172733"/>
<dbReference type="WormBase" id="W10D5.3a">
    <molecule id="Q94361-5"/>
    <property type="protein sequence ID" value="CE46915"/>
    <property type="gene ID" value="WBGene00001574"/>
    <property type="gene designation" value="gei-17"/>
</dbReference>
<dbReference type="WormBase" id="W10D5.3c">
    <molecule id="Q94361-1"/>
    <property type="protein sequence ID" value="CE46906"/>
    <property type="gene ID" value="WBGene00001574"/>
    <property type="gene designation" value="gei-17"/>
</dbReference>
<dbReference type="WormBase" id="W10D5.3d">
    <molecule id="Q94361-6"/>
    <property type="protein sequence ID" value="CE46859"/>
    <property type="gene ID" value="WBGene00001574"/>
    <property type="gene designation" value="gei-17"/>
</dbReference>
<dbReference type="WormBase" id="W10D5.3e">
    <molecule id="Q94361-4"/>
    <property type="protein sequence ID" value="CE47019"/>
    <property type="gene ID" value="WBGene00001574"/>
    <property type="gene designation" value="gei-17"/>
</dbReference>
<dbReference type="WormBase" id="W10D5.3f">
    <molecule id="Q94361-2"/>
    <property type="protein sequence ID" value="CE46965"/>
    <property type="gene ID" value="WBGene00001574"/>
    <property type="gene designation" value="gei-17"/>
</dbReference>
<dbReference type="WormBase" id="W10D5.3g">
    <molecule id="Q94361-3"/>
    <property type="protein sequence ID" value="CE46934"/>
    <property type="gene ID" value="WBGene00001574"/>
    <property type="gene designation" value="gei-17"/>
</dbReference>
<dbReference type="eggNOG" id="KOG2169">
    <property type="taxonomic scope" value="Eukaryota"/>
</dbReference>
<dbReference type="GeneTree" id="ENSGT01030000234539"/>
<dbReference type="InParanoid" id="Q94361"/>
<dbReference type="OMA" id="PTEQIWK"/>
<dbReference type="OrthoDB" id="5875376at2759"/>
<dbReference type="Reactome" id="R-CEL-3108214">
    <property type="pathway name" value="SUMOylation of DNA damage response and repair proteins"/>
</dbReference>
<dbReference type="Reactome" id="R-CEL-3232118">
    <property type="pathway name" value="SUMOylation of transcription factors"/>
</dbReference>
<dbReference type="Reactome" id="R-CEL-3232142">
    <property type="pathway name" value="SUMOylation of ubiquitinylation proteins"/>
</dbReference>
<dbReference type="Reactome" id="R-CEL-3899300">
    <property type="pathway name" value="SUMOylation of transcription cofactors"/>
</dbReference>
<dbReference type="Reactome" id="R-CEL-4085377">
    <property type="pathway name" value="SUMOylation of SUMOylation proteins"/>
</dbReference>
<dbReference type="Reactome" id="R-CEL-4090294">
    <property type="pathway name" value="SUMOylation of intracellular receptors"/>
</dbReference>
<dbReference type="Reactome" id="R-CEL-4551638">
    <property type="pathway name" value="SUMOylation of chromatin organization proteins"/>
</dbReference>
<dbReference type="Reactome" id="R-CEL-5696395">
    <property type="pathway name" value="Formation of Incision Complex in GG-NER"/>
</dbReference>
<dbReference type="Reactome" id="R-CEL-877312">
    <property type="pathway name" value="Regulation of IFNG signaling"/>
</dbReference>
<dbReference type="SignaLink" id="Q94361"/>
<dbReference type="UniPathway" id="UPA00886"/>
<dbReference type="PRO" id="PR:Q94361"/>
<dbReference type="Proteomes" id="UP000001940">
    <property type="component" value="Chromosome I"/>
</dbReference>
<dbReference type="Bgee" id="WBGene00001574">
    <property type="expression patterns" value="Expressed in pharyngeal muscle cell (C elegans) and 4 other cell types or tissues"/>
</dbReference>
<dbReference type="GO" id="GO:0000785">
    <property type="term" value="C:chromatin"/>
    <property type="evidence" value="ECO:0000314"/>
    <property type="project" value="WormBase"/>
</dbReference>
<dbReference type="GO" id="GO:0070090">
    <property type="term" value="C:metaphase plate"/>
    <property type="evidence" value="ECO:0000314"/>
    <property type="project" value="WormBase"/>
</dbReference>
<dbReference type="GO" id="GO:0061629">
    <property type="term" value="F:RNA polymerase II-specific DNA-binding transcription factor binding"/>
    <property type="evidence" value="ECO:0000353"/>
    <property type="project" value="WormBase"/>
</dbReference>
<dbReference type="GO" id="GO:0061665">
    <property type="term" value="F:SUMO ligase activity"/>
    <property type="evidence" value="ECO:0000314"/>
    <property type="project" value="WormBase"/>
</dbReference>
<dbReference type="GO" id="GO:0003712">
    <property type="term" value="F:transcription coregulator activity"/>
    <property type="evidence" value="ECO:0000318"/>
    <property type="project" value="GO_Central"/>
</dbReference>
<dbReference type="GO" id="GO:0008270">
    <property type="term" value="F:zinc ion binding"/>
    <property type="evidence" value="ECO:0007669"/>
    <property type="project" value="UniProtKB-KW"/>
</dbReference>
<dbReference type="GO" id="GO:0006974">
    <property type="term" value="P:DNA damage response"/>
    <property type="evidence" value="ECO:0000315"/>
    <property type="project" value="WormBase"/>
</dbReference>
<dbReference type="GO" id="GO:0006281">
    <property type="term" value="P:DNA repair"/>
    <property type="evidence" value="ECO:0007669"/>
    <property type="project" value="UniProtKB-KW"/>
</dbReference>
<dbReference type="GO" id="GO:0009792">
    <property type="term" value="P:embryo development ending in birth or egg hatching"/>
    <property type="evidence" value="ECO:0000315"/>
    <property type="project" value="WormBase"/>
</dbReference>
<dbReference type="GO" id="GO:0043060">
    <property type="term" value="P:meiotic metaphase I homologous chromosome alignment"/>
    <property type="evidence" value="ECO:0000315"/>
    <property type="project" value="WormBase"/>
</dbReference>
<dbReference type="GO" id="GO:1904290">
    <property type="term" value="P:negative regulation of mitotic DNA damage checkpoint"/>
    <property type="evidence" value="ECO:0000315"/>
    <property type="project" value="WormBase"/>
</dbReference>
<dbReference type="GO" id="GO:0042177">
    <property type="term" value="P:negative regulation of protein catabolic process"/>
    <property type="evidence" value="ECO:0000315"/>
    <property type="project" value="WormBase"/>
</dbReference>
<dbReference type="GO" id="GO:1904333">
    <property type="term" value="P:positive regulation of error-prone translesion synthesis"/>
    <property type="evidence" value="ECO:0000315"/>
    <property type="project" value="WormBase"/>
</dbReference>
<dbReference type="GO" id="GO:0016925">
    <property type="term" value="P:protein sumoylation"/>
    <property type="evidence" value="ECO:0000314"/>
    <property type="project" value="WormBase"/>
</dbReference>
<dbReference type="GO" id="GO:0010468">
    <property type="term" value="P:regulation of gene expression"/>
    <property type="evidence" value="ECO:0000315"/>
    <property type="project" value="UniProtKB"/>
</dbReference>
<dbReference type="GO" id="GO:0006357">
    <property type="term" value="P:regulation of transcription by RNA polymerase II"/>
    <property type="evidence" value="ECO:0000318"/>
    <property type="project" value="GO_Central"/>
</dbReference>
<dbReference type="CDD" id="cd16650">
    <property type="entry name" value="SP-RING_PIAS-like"/>
    <property type="match status" value="1"/>
</dbReference>
<dbReference type="FunFam" id="2.60.120.780:FF:000007">
    <property type="entry name" value="E3 SUMO-protein ligase gei-17"/>
    <property type="match status" value="1"/>
</dbReference>
<dbReference type="Gene3D" id="2.60.120.780">
    <property type="entry name" value="PINIT domain"/>
    <property type="match status" value="1"/>
</dbReference>
<dbReference type="Gene3D" id="3.30.40.10">
    <property type="entry name" value="Zinc/RING finger domain, C3HC4 (zinc finger)"/>
    <property type="match status" value="1"/>
</dbReference>
<dbReference type="InterPro" id="IPR023321">
    <property type="entry name" value="PINIT"/>
</dbReference>
<dbReference type="InterPro" id="IPR038654">
    <property type="entry name" value="PINIT_sf"/>
</dbReference>
<dbReference type="InterPro" id="IPR004181">
    <property type="entry name" value="Znf_MIZ"/>
</dbReference>
<dbReference type="InterPro" id="IPR013083">
    <property type="entry name" value="Znf_RING/FYVE/PHD"/>
</dbReference>
<dbReference type="PANTHER" id="PTHR10782:SF94">
    <property type="entry name" value="SUPPRESSOR OF VARIEGATION 2-10, ISOFORM I"/>
    <property type="match status" value="1"/>
</dbReference>
<dbReference type="PANTHER" id="PTHR10782">
    <property type="entry name" value="ZINC FINGER MIZ DOMAIN-CONTAINING PROTEIN"/>
    <property type="match status" value="1"/>
</dbReference>
<dbReference type="Pfam" id="PF14324">
    <property type="entry name" value="PINIT"/>
    <property type="match status" value="1"/>
</dbReference>
<dbReference type="Pfam" id="PF02891">
    <property type="entry name" value="zf-MIZ"/>
    <property type="match status" value="1"/>
</dbReference>
<dbReference type="PROSITE" id="PS51466">
    <property type="entry name" value="PINIT"/>
    <property type="match status" value="1"/>
</dbReference>
<dbReference type="PROSITE" id="PS51044">
    <property type="entry name" value="ZF_SP_RING"/>
    <property type="match status" value="1"/>
</dbReference>
<gene>
    <name evidence="13" type="primary">gei-17</name>
    <name evidence="13" type="ORF">W10D5.3</name>
</gene>
<protein>
    <recommendedName>
        <fullName>E3 SUMO-protein ligase gei-17</fullName>
        <ecNumber>2.3.2.-</ecNumber>
    </recommendedName>
    <alternativeName>
        <fullName evidence="12">E3 SUMO-protein transferase gei-17</fullName>
    </alternativeName>
    <alternativeName>
        <fullName>Gex-3-interacting protein 17</fullName>
    </alternativeName>
</protein>
<comment type="function">
    <text evidence="5 6 7 8 9 11">Functions as an E3-type smo-1 ligase (PubMed:15654100, PubMed:16549501, PubMed:16701625, PubMed:25475837). Mediates smo-1 conjugation to air-2 in vitro and is required for proper chromosome alignment (PubMed:25475837). In the early embryo, specifically suppresses checkpoint activation in response to DNA damage, maybe by promoting mus-101 sumoylation (PubMed:15654100). In embryos, plays a role in determining telomere localization in the nucleus (PubMed:24297748). Acts with pie-1 to promote piRNA-mediated silencing and fertility in the adult germline (PubMed:34003111).</text>
</comment>
<comment type="pathway">
    <text>Protein modification; protein sumoylation.</text>
</comment>
<comment type="subunit">
    <text evidence="4">May interact with gex-3.</text>
</comment>
<comment type="alternative products">
    <event type="alternative splicing"/>
    <isoform>
        <id>Q94361-1</id>
        <name>1</name>
        <name>c</name>
        <sequence type="displayed"/>
    </isoform>
    <isoform>
        <id>Q94361-2</id>
        <name>2</name>
        <name>f</name>
        <sequence type="described" ref="VSP_022187 VSP_022191"/>
    </isoform>
    <isoform>
        <id>Q94361-3</id>
        <name>3</name>
        <name>g</name>
        <sequence type="described" ref="VSP_022185 VSP_022190 VSP_022191"/>
    </isoform>
    <isoform>
        <id>Q94361-4</id>
        <name>4</name>
        <name>e</name>
        <sequence type="described" ref="VSP_022187 VSP_022188 VSP_022189"/>
    </isoform>
    <isoform>
        <id>Q94361-5</id>
        <name>5</name>
        <name>a</name>
        <sequence type="described" ref="VSP_022187 VSP_022189"/>
    </isoform>
    <isoform>
        <id>Q94361-6</id>
        <name>6</name>
        <name>d</name>
        <sequence type="described" ref="VSP_022186 VSP_022187 VSP_022189"/>
    </isoform>
</comment>
<comment type="disruption phenotype">
    <text evidence="8 9 10 11">RNAi-mediated knockdown abolishes metaphase and spindle midzone-specific smo-1 conjugation during the first embryonic mitotic division. RNAi-mediated knockdown disrupts the anchoring of telomeres to the nuclear envelope in embryos, but not in muscle nuclei (PubMed:24297748). RNAi-mediated knockdown results in ectopic tbx-2 expression in seam cells, the gut and in the syncytial hypodermis (PubMed:25873636). RNAi-mediated knockdown results in 19% embryonic arrest with 2% having extra intestinal cells, which increases to 82% and 77%, respectively in pie-1 mutant background (PubMed:34003111).</text>
</comment>
<comment type="similarity">
    <text evidence="12">Belongs to the PIAS family.</text>
</comment>
<feature type="chain" id="PRO_0000270191" description="E3 SUMO-protein ligase gei-17">
    <location>
        <begin position="1"/>
        <end position="780"/>
    </location>
</feature>
<feature type="domain" description="PINIT" evidence="2">
    <location>
        <begin position="203"/>
        <end position="367"/>
    </location>
</feature>
<feature type="zinc finger region" description="SP-RING-type" evidence="1">
    <location>
        <begin position="400"/>
        <end position="485"/>
    </location>
</feature>
<feature type="region of interest" description="Disordered" evidence="3">
    <location>
        <begin position="181"/>
        <end position="210"/>
    </location>
</feature>
<feature type="region of interest" description="Disordered" evidence="3">
    <location>
        <begin position="519"/>
        <end position="544"/>
    </location>
</feature>
<feature type="region of interest" description="Disordered" evidence="3">
    <location>
        <begin position="560"/>
        <end position="594"/>
    </location>
</feature>
<feature type="region of interest" description="Disordered" evidence="3">
    <location>
        <begin position="732"/>
        <end position="755"/>
    </location>
</feature>
<feature type="compositionally biased region" description="Polar residues" evidence="3">
    <location>
        <begin position="519"/>
        <end position="530"/>
    </location>
</feature>
<feature type="compositionally biased region" description="Low complexity" evidence="3">
    <location>
        <begin position="732"/>
        <end position="749"/>
    </location>
</feature>
<feature type="binding site" evidence="1">
    <location>
        <position position="431"/>
    </location>
    <ligand>
        <name>Zn(2+)</name>
        <dbReference type="ChEBI" id="CHEBI:29105"/>
    </ligand>
</feature>
<feature type="binding site" evidence="1">
    <location>
        <position position="433"/>
    </location>
    <ligand>
        <name>Zn(2+)</name>
        <dbReference type="ChEBI" id="CHEBI:29105"/>
    </ligand>
</feature>
<feature type="binding site" evidence="1">
    <location>
        <position position="454"/>
    </location>
    <ligand>
        <name>Zn(2+)</name>
        <dbReference type="ChEBI" id="CHEBI:29105"/>
    </ligand>
</feature>
<feature type="binding site" evidence="1">
    <location>
        <position position="457"/>
    </location>
    <ligand>
        <name>Zn(2+)</name>
        <dbReference type="ChEBI" id="CHEBI:29105"/>
    </ligand>
</feature>
<feature type="splice variant" id="VSP_022185" description="In isoform 3." evidence="12">
    <location>
        <begin position="85"/>
        <end position="206"/>
    </location>
</feature>
<feature type="splice variant" id="VSP_022186" description="In isoform 6." evidence="12">
    <location>
        <begin position="85"/>
        <end position="86"/>
    </location>
</feature>
<feature type="splice variant" id="VSP_022187" description="In isoform 2, isoform 4, isoform 5 and isoform 6." evidence="12">
    <location>
        <begin position="152"/>
        <end position="206"/>
    </location>
</feature>
<feature type="splice variant" id="VSP_022188" description="In isoform 4." evidence="12">
    <location>
        <begin position="559"/>
        <end position="574"/>
    </location>
</feature>
<feature type="splice variant" id="VSP_022189" description="In isoform 4, isoform 5 and isoform 6." evidence="12">
    <location>
        <begin position="661"/>
        <end position="706"/>
    </location>
</feature>
<feature type="splice variant" id="VSP_022190" description="In isoform 3." evidence="12">
    <location>
        <position position="661"/>
    </location>
</feature>
<feature type="splice variant" id="VSP_022191" description="In isoform 2 and isoform 3." evidence="12">
    <original>GAFAYYPPQYPQQQYRQN</original>
    <variation>DTNNIQPPRILSMAEIQANASRLLVNGHLMIDHSGVTMRNPRGSRN</variation>
    <location>
        <begin position="763"/>
        <end position="780"/>
    </location>
</feature>
<feature type="mutagenesis site" description="Greatly reduces E3 ligase activity and decreases smo-1 chain formation." evidence="9">
    <original>L</original>
    <variation>A</variation>
    <location>
        <position position="417"/>
    </location>
</feature>
<name>GEI17_CAEEL</name>
<proteinExistence type="evidence at protein level"/>
<accession>Q94361</accession>
<accession>Q564X2</accession>
<accession>Q7Z0X3</accession>
<accession>Q7Z0X4</accession>
<accession>Q94363</accession>
<accession>Q9U326</accession>
<keyword id="KW-0025">Alternative splicing</keyword>
<keyword id="KW-0227">DNA damage</keyword>
<keyword id="KW-0234">DNA repair</keyword>
<keyword id="KW-0479">Metal-binding</keyword>
<keyword id="KW-1185">Reference proteome</keyword>
<keyword id="KW-0808">Transferase</keyword>
<keyword id="KW-0833">Ubl conjugation pathway</keyword>
<keyword id="KW-0862">Zinc</keyword>
<keyword id="KW-0863">Zinc-finger</keyword>
<reference key="1">
    <citation type="journal article" date="1998" name="Science">
        <title>Genome sequence of the nematode C. elegans: a platform for investigating biology.</title>
        <authorList>
            <consortium name="The C. elegans sequencing consortium"/>
        </authorList>
    </citation>
    <scope>NUCLEOTIDE SEQUENCE [LARGE SCALE GENOMIC DNA]</scope>
    <source>
        <strain>Bristol N2</strain>
    </source>
</reference>
<reference key="2">
    <citation type="journal article" date="2002" name="Biochem. Biophys. Res. Commun.">
        <title>Isolation of the interacting molecules with GEX-3 by a novel functional screening.</title>
        <authorList>
            <person name="Tsuboi D."/>
            <person name="Qadota H."/>
            <person name="Kasuya K."/>
            <person name="Amano M."/>
            <person name="Kaibuchi K."/>
        </authorList>
    </citation>
    <scope>POSSIBLE INTERACTION WITH GEX-3</scope>
</reference>
<reference key="3">
    <citation type="journal article" date="2005" name="Genetics">
        <title>Systematic, RNA-interference-mediated identification of mus-101 modifier genes in Caenorhabditis elegans.</title>
        <authorList>
            <person name="Holway A.H."/>
            <person name="Hung C."/>
            <person name="Michael W.M."/>
        </authorList>
    </citation>
    <scope>FUNCTION</scope>
</reference>
<reference key="4">
    <citation type="journal article" date="2006" name="Dev. Biol.">
        <title>The T-box factor TBX-2 and the SUMO conjugating enzyme UBC-9 are required for ABa-derived pharyngeal muscle in C. elegans.</title>
        <authorList>
            <person name="Roy Chowdhuri S."/>
            <person name="Crum T."/>
            <person name="Woollard A."/>
            <person name="Aslam S."/>
            <person name="Okkema P.G."/>
        </authorList>
    </citation>
    <scope>FUNCTION</scope>
</reference>
<reference key="5">
    <citation type="journal article" date="2006" name="J. Cell Biol.">
        <title>Checkpoint silencing during the DNA damage response in Caenorhabditis elegans embryos.</title>
        <authorList>
            <person name="Holway A.H."/>
            <person name="Kim S.-H."/>
            <person name="La Volpe A."/>
            <person name="Michael W.M."/>
        </authorList>
    </citation>
    <scope>FUNCTION</scope>
</reference>
<reference key="6">
    <citation type="journal article" date="2013" name="J. Cell Biol.">
        <title>The shelterin protein POT-1 anchors Caenorhabditis elegans telomeres through SUN-1 at the nuclear periphery.</title>
        <authorList>
            <person name="Ferreira H.C."/>
            <person name="Towbin B.D."/>
            <person name="Jegou T."/>
            <person name="Gasser S.M."/>
        </authorList>
    </citation>
    <scope>FUNCTION</scope>
    <scope>DISRUPTION PHENOTYPE</scope>
</reference>
<reference key="7">
    <citation type="journal article" date="2014" name="Nat. Commun.">
        <title>Dynamic SUMO modification regulates mitotic chromosome assembly and cell cycle progression in Caenorhabditis elegans.</title>
        <authorList>
            <person name="Pelisch F."/>
            <person name="Sonneville R."/>
            <person name="Pourkarimi E."/>
            <person name="Agostinho A."/>
            <person name="Blow J.J."/>
            <person name="Gartner A."/>
            <person name="Hay R.T."/>
        </authorList>
    </citation>
    <scope>FUNCTION</scope>
    <scope>DISRUPTION PHENOTYPE</scope>
    <scope>MUTAGENESIS OF LEU-417</scope>
</reference>
<reference key="8">
    <citation type="journal article" date="2015" name="G3 (Bethesda)">
        <title>Caenorhabditis elegans TBX-2 Directly Regulates Its Own Expression in a Negative Autoregulatory Loop.</title>
        <authorList>
            <person name="Milton A.C."/>
            <person name="Okkema P.G."/>
        </authorList>
    </citation>
    <scope>DISRUPTION PHENOTYPE</scope>
</reference>
<reference evidence="12" key="9">
    <citation type="journal article" date="2021" name="Elife">
        <title>PIE-1 SUMOylation promotes germline fates and piRNA-dependent silencing in C. elegans.</title>
        <authorList>
            <person name="Kim H."/>
            <person name="Ding Y.H."/>
            <person name="Lu S."/>
            <person name="Zuo M.Q."/>
            <person name="Tan W."/>
            <person name="Conte D. Jr."/>
            <person name="Dong M.Q."/>
            <person name="Mello C.C."/>
        </authorList>
    </citation>
    <scope>FUNCTION</scope>
    <scope>DISRUPTION PHENOTYPE</scope>
</reference>
<organism>
    <name type="scientific">Caenorhabditis elegans</name>
    <dbReference type="NCBI Taxonomy" id="6239"/>
    <lineage>
        <taxon>Eukaryota</taxon>
        <taxon>Metazoa</taxon>
        <taxon>Ecdysozoa</taxon>
        <taxon>Nematoda</taxon>
        <taxon>Chromadorea</taxon>
        <taxon>Rhabditida</taxon>
        <taxon>Rhabditina</taxon>
        <taxon>Rhabditomorpha</taxon>
        <taxon>Rhabditoidea</taxon>
        <taxon>Rhabditidae</taxon>
        <taxon>Peloderinae</taxon>
        <taxon>Caenorhabditis</taxon>
    </lineage>
</organism>